<feature type="chain" id="PRO_1000078827" description="Phenylalanine--tRNA ligase alpha subunit">
    <location>
        <begin position="1"/>
        <end position="369"/>
    </location>
</feature>
<feature type="binding site" evidence="1">
    <location>
        <position position="269"/>
    </location>
    <ligand>
        <name>Mg(2+)</name>
        <dbReference type="ChEBI" id="CHEBI:18420"/>
        <note>shared with beta subunit</note>
    </ligand>
</feature>
<accession>A9M9V4</accession>
<protein>
    <recommendedName>
        <fullName evidence="1">Phenylalanine--tRNA ligase alpha subunit</fullName>
        <ecNumber evidence="1">6.1.1.20</ecNumber>
    </recommendedName>
    <alternativeName>
        <fullName evidence="1">Phenylalanyl-tRNA synthetase alpha subunit</fullName>
        <shortName evidence="1">PheRS</shortName>
    </alternativeName>
</protein>
<keyword id="KW-0030">Aminoacyl-tRNA synthetase</keyword>
<keyword id="KW-0067">ATP-binding</keyword>
<keyword id="KW-0963">Cytoplasm</keyword>
<keyword id="KW-0436">Ligase</keyword>
<keyword id="KW-0460">Magnesium</keyword>
<keyword id="KW-0479">Metal-binding</keyword>
<keyword id="KW-0547">Nucleotide-binding</keyword>
<keyword id="KW-0648">Protein biosynthesis</keyword>
<keyword id="KW-1185">Reference proteome</keyword>
<proteinExistence type="inferred from homology"/>
<gene>
    <name evidence="1" type="primary">pheS</name>
    <name type="ordered locus">BCAN_A2166</name>
</gene>
<dbReference type="EC" id="6.1.1.20" evidence="1"/>
<dbReference type="EMBL" id="CP000872">
    <property type="protein sequence ID" value="ABX63149.1"/>
    <property type="molecule type" value="Genomic_DNA"/>
</dbReference>
<dbReference type="RefSeq" id="WP_004692066.1">
    <property type="nucleotide sequence ID" value="NC_010103.1"/>
</dbReference>
<dbReference type="SMR" id="A9M9V4"/>
<dbReference type="GeneID" id="55591688"/>
<dbReference type="KEGG" id="bcs:BCAN_A2166"/>
<dbReference type="HOGENOM" id="CLU_025086_0_1_5"/>
<dbReference type="PhylomeDB" id="A9M9V4"/>
<dbReference type="Proteomes" id="UP000001385">
    <property type="component" value="Chromosome I"/>
</dbReference>
<dbReference type="GO" id="GO:0005737">
    <property type="term" value="C:cytoplasm"/>
    <property type="evidence" value="ECO:0007669"/>
    <property type="project" value="UniProtKB-SubCell"/>
</dbReference>
<dbReference type="GO" id="GO:0005524">
    <property type="term" value="F:ATP binding"/>
    <property type="evidence" value="ECO:0007669"/>
    <property type="project" value="UniProtKB-UniRule"/>
</dbReference>
<dbReference type="GO" id="GO:0000287">
    <property type="term" value="F:magnesium ion binding"/>
    <property type="evidence" value="ECO:0007669"/>
    <property type="project" value="UniProtKB-UniRule"/>
</dbReference>
<dbReference type="GO" id="GO:0004826">
    <property type="term" value="F:phenylalanine-tRNA ligase activity"/>
    <property type="evidence" value="ECO:0007669"/>
    <property type="project" value="UniProtKB-UniRule"/>
</dbReference>
<dbReference type="GO" id="GO:0000049">
    <property type="term" value="F:tRNA binding"/>
    <property type="evidence" value="ECO:0007669"/>
    <property type="project" value="InterPro"/>
</dbReference>
<dbReference type="GO" id="GO:0006432">
    <property type="term" value="P:phenylalanyl-tRNA aminoacylation"/>
    <property type="evidence" value="ECO:0007669"/>
    <property type="project" value="UniProtKB-UniRule"/>
</dbReference>
<dbReference type="CDD" id="cd00496">
    <property type="entry name" value="PheRS_alpha_core"/>
    <property type="match status" value="1"/>
</dbReference>
<dbReference type="FunFam" id="3.30.930.10:FF:000003">
    <property type="entry name" value="Phenylalanine--tRNA ligase alpha subunit"/>
    <property type="match status" value="1"/>
</dbReference>
<dbReference type="Gene3D" id="3.30.930.10">
    <property type="entry name" value="Bira Bifunctional Protein, Domain 2"/>
    <property type="match status" value="1"/>
</dbReference>
<dbReference type="HAMAP" id="MF_00281">
    <property type="entry name" value="Phe_tRNA_synth_alpha1"/>
    <property type="match status" value="1"/>
</dbReference>
<dbReference type="InterPro" id="IPR006195">
    <property type="entry name" value="aa-tRNA-synth_II"/>
</dbReference>
<dbReference type="InterPro" id="IPR045864">
    <property type="entry name" value="aa-tRNA-synth_II/BPL/LPL"/>
</dbReference>
<dbReference type="InterPro" id="IPR004529">
    <property type="entry name" value="Phe-tRNA-synth_IIc_asu"/>
</dbReference>
<dbReference type="InterPro" id="IPR004188">
    <property type="entry name" value="Phe-tRNA_ligase_II_N"/>
</dbReference>
<dbReference type="InterPro" id="IPR022911">
    <property type="entry name" value="Phe_tRNA_ligase_alpha1_bac"/>
</dbReference>
<dbReference type="InterPro" id="IPR002319">
    <property type="entry name" value="Phenylalanyl-tRNA_Synthase"/>
</dbReference>
<dbReference type="InterPro" id="IPR010978">
    <property type="entry name" value="tRNA-bd_arm"/>
</dbReference>
<dbReference type="NCBIfam" id="TIGR00468">
    <property type="entry name" value="pheS"/>
    <property type="match status" value="1"/>
</dbReference>
<dbReference type="PANTHER" id="PTHR11538:SF41">
    <property type="entry name" value="PHENYLALANINE--TRNA LIGASE, MITOCHONDRIAL"/>
    <property type="match status" value="1"/>
</dbReference>
<dbReference type="PANTHER" id="PTHR11538">
    <property type="entry name" value="PHENYLALANYL-TRNA SYNTHETASE"/>
    <property type="match status" value="1"/>
</dbReference>
<dbReference type="Pfam" id="PF02912">
    <property type="entry name" value="Phe_tRNA-synt_N"/>
    <property type="match status" value="1"/>
</dbReference>
<dbReference type="Pfam" id="PF01409">
    <property type="entry name" value="tRNA-synt_2d"/>
    <property type="match status" value="1"/>
</dbReference>
<dbReference type="SUPFAM" id="SSF55681">
    <property type="entry name" value="Class II aaRS and biotin synthetases"/>
    <property type="match status" value="1"/>
</dbReference>
<dbReference type="SUPFAM" id="SSF46589">
    <property type="entry name" value="tRNA-binding arm"/>
    <property type="match status" value="1"/>
</dbReference>
<dbReference type="PROSITE" id="PS50862">
    <property type="entry name" value="AA_TRNA_LIGASE_II"/>
    <property type="match status" value="1"/>
</dbReference>
<organism>
    <name type="scientific">Brucella canis (strain ATCC 23365 / NCTC 10854 / RM-666)</name>
    <dbReference type="NCBI Taxonomy" id="483179"/>
    <lineage>
        <taxon>Bacteria</taxon>
        <taxon>Pseudomonadati</taxon>
        <taxon>Pseudomonadota</taxon>
        <taxon>Alphaproteobacteria</taxon>
        <taxon>Hyphomicrobiales</taxon>
        <taxon>Brucellaceae</taxon>
        <taxon>Brucella/Ochrobactrum group</taxon>
        <taxon>Brucella</taxon>
    </lineage>
</organism>
<name>SYFA_BRUC2</name>
<reference key="1">
    <citation type="submission" date="2007-10" db="EMBL/GenBank/DDBJ databases">
        <title>Brucella canis ATCC 23365 whole genome shotgun sequencing project.</title>
        <authorList>
            <person name="Setubal J.C."/>
            <person name="Bowns C."/>
            <person name="Boyle S."/>
            <person name="Crasta O.R."/>
            <person name="Czar M.J."/>
            <person name="Dharmanolla C."/>
            <person name="Gillespie J.J."/>
            <person name="Kenyon R.W."/>
            <person name="Lu J."/>
            <person name="Mane S."/>
            <person name="Mohapatra S."/>
            <person name="Nagrani S."/>
            <person name="Purkayastha A."/>
            <person name="Rajasimha H.K."/>
            <person name="Shallom J.M."/>
            <person name="Shallom S."/>
            <person name="Shukla M."/>
            <person name="Snyder E.E."/>
            <person name="Sobral B.W."/>
            <person name="Wattam A.R."/>
            <person name="Will R."/>
            <person name="Williams K."/>
            <person name="Yoo H."/>
            <person name="Bruce D."/>
            <person name="Detter C."/>
            <person name="Munk C."/>
            <person name="Brettin T.S."/>
        </authorList>
    </citation>
    <scope>NUCLEOTIDE SEQUENCE [LARGE SCALE GENOMIC DNA]</scope>
    <source>
        <strain>ATCC 23365 / NCTC 10854 / RM-666</strain>
    </source>
</reference>
<sequence length="369" mass="41672">MNDLEQLERQILEDIAAAVDEQGIEAVRVAALGKKGTVSEKLKTLGGMSPEERQMQGPAINGLKNRVTEALSERRTELRKAAVAARLEREKVDVTLPVRESAASRGRIHPISQVIDEITAIFADMGFSIAEGPDIETDYYNFTALNFPEGHPAREMHDTFFFNPDEKSERKLLRTHTSPVQVHTMEKFAAMRDKEGRDELIRIVIPGKTYRMDSDATHSPMFHQVEGLVVDKSANVANMKWVLEEFCKAFFEVPSVKMRMRPSFFPFTEPSVEVDIQCDRSGPHVKFGEGNDWLEILGCGMVHPNVLRMSGYDPEVYQGFAWGMGIDRIAMLKYGMPDLRAFFDADVRWIEHYGFRPLDIPTLFGGLSA</sequence>
<evidence type="ECO:0000255" key="1">
    <source>
        <dbReference type="HAMAP-Rule" id="MF_00281"/>
    </source>
</evidence>
<comment type="catalytic activity">
    <reaction evidence="1">
        <text>tRNA(Phe) + L-phenylalanine + ATP = L-phenylalanyl-tRNA(Phe) + AMP + diphosphate + H(+)</text>
        <dbReference type="Rhea" id="RHEA:19413"/>
        <dbReference type="Rhea" id="RHEA-COMP:9668"/>
        <dbReference type="Rhea" id="RHEA-COMP:9699"/>
        <dbReference type="ChEBI" id="CHEBI:15378"/>
        <dbReference type="ChEBI" id="CHEBI:30616"/>
        <dbReference type="ChEBI" id="CHEBI:33019"/>
        <dbReference type="ChEBI" id="CHEBI:58095"/>
        <dbReference type="ChEBI" id="CHEBI:78442"/>
        <dbReference type="ChEBI" id="CHEBI:78531"/>
        <dbReference type="ChEBI" id="CHEBI:456215"/>
        <dbReference type="EC" id="6.1.1.20"/>
    </reaction>
</comment>
<comment type="cofactor">
    <cofactor evidence="1">
        <name>Mg(2+)</name>
        <dbReference type="ChEBI" id="CHEBI:18420"/>
    </cofactor>
    <text evidence="1">Binds 2 magnesium ions per tetramer.</text>
</comment>
<comment type="subunit">
    <text evidence="1">Tetramer of two alpha and two beta subunits.</text>
</comment>
<comment type="subcellular location">
    <subcellularLocation>
        <location evidence="1">Cytoplasm</location>
    </subcellularLocation>
</comment>
<comment type="similarity">
    <text evidence="1">Belongs to the class-II aminoacyl-tRNA synthetase family. Phe-tRNA synthetase alpha subunit type 1 subfamily.</text>
</comment>